<reference key="1">
    <citation type="journal article" date="2008" name="Proc. Natl. Acad. Sci. U.S.A.">
        <title>Niche adaptation and genome expansion in the chlorophyll d-producing cyanobacterium Acaryochloris marina.</title>
        <authorList>
            <person name="Swingley W.D."/>
            <person name="Chen M."/>
            <person name="Cheung P.C."/>
            <person name="Conrad A.L."/>
            <person name="Dejesa L.C."/>
            <person name="Hao J."/>
            <person name="Honchak B.M."/>
            <person name="Karbach L.E."/>
            <person name="Kurdoglu A."/>
            <person name="Lahiri S."/>
            <person name="Mastrian S.D."/>
            <person name="Miyashita H."/>
            <person name="Page L."/>
            <person name="Ramakrishna P."/>
            <person name="Satoh S."/>
            <person name="Sattley W.M."/>
            <person name="Shimada Y."/>
            <person name="Taylor H.L."/>
            <person name="Tomo T."/>
            <person name="Tsuchiya T."/>
            <person name="Wang Z.T."/>
            <person name="Raymond J."/>
            <person name="Mimuro M."/>
            <person name="Blankenship R.E."/>
            <person name="Touchman J.W."/>
        </authorList>
    </citation>
    <scope>NUCLEOTIDE SEQUENCE [LARGE SCALE GENOMIC DNA]</scope>
    <source>
        <strain>MBIC 11017</strain>
    </source>
</reference>
<comment type="function">
    <text evidence="1">Endonuclease that specifically degrades the RNA of RNA-DNA hybrids.</text>
</comment>
<comment type="catalytic activity">
    <reaction evidence="1">
        <text>Endonucleolytic cleavage to 5'-phosphomonoester.</text>
        <dbReference type="EC" id="3.1.26.4"/>
    </reaction>
</comment>
<comment type="cofactor">
    <cofactor evidence="1">
        <name>Mn(2+)</name>
        <dbReference type="ChEBI" id="CHEBI:29035"/>
    </cofactor>
    <cofactor evidence="1">
        <name>Mg(2+)</name>
        <dbReference type="ChEBI" id="CHEBI:18420"/>
    </cofactor>
    <text evidence="1">Manganese or magnesium. Binds 1 divalent metal ion per monomer in the absence of substrate. May bind a second metal ion after substrate binding.</text>
</comment>
<comment type="subcellular location">
    <subcellularLocation>
        <location evidence="1">Cytoplasm</location>
    </subcellularLocation>
</comment>
<comment type="similarity">
    <text evidence="1">Belongs to the RNase HII family.</text>
</comment>
<sequence length="198" mass="21583">MDDASEQIAGVDEVGRGALFGPVVAATVILSDGAIEQLVAQGMTDSKKLSPQRRMILMNQIREVATGFRVGMASVYEIDRLNILQASLLAMRRAVLGLPSTPQLCLVDGNQRIPNLPVPQRTVVKGDQSEPEIAAASILAKVWRDQLIVRLDQRYPGYDLASNKGYGSAKHRQALRELGPTRQHRLSFAPCQASLLPD</sequence>
<feature type="chain" id="PRO_0000334849" description="Ribonuclease HII">
    <location>
        <begin position="1"/>
        <end position="198"/>
    </location>
</feature>
<feature type="domain" description="RNase H type-2" evidence="2">
    <location>
        <begin position="6"/>
        <end position="198"/>
    </location>
</feature>
<feature type="binding site" evidence="1">
    <location>
        <position position="12"/>
    </location>
    <ligand>
        <name>a divalent metal cation</name>
        <dbReference type="ChEBI" id="CHEBI:60240"/>
    </ligand>
</feature>
<feature type="binding site" evidence="1">
    <location>
        <position position="13"/>
    </location>
    <ligand>
        <name>a divalent metal cation</name>
        <dbReference type="ChEBI" id="CHEBI:60240"/>
    </ligand>
</feature>
<feature type="binding site" evidence="1">
    <location>
        <position position="108"/>
    </location>
    <ligand>
        <name>a divalent metal cation</name>
        <dbReference type="ChEBI" id="CHEBI:60240"/>
    </ligand>
</feature>
<evidence type="ECO:0000255" key="1">
    <source>
        <dbReference type="HAMAP-Rule" id="MF_00052"/>
    </source>
</evidence>
<evidence type="ECO:0000255" key="2">
    <source>
        <dbReference type="PROSITE-ProRule" id="PRU01319"/>
    </source>
</evidence>
<accession>B0CAM1</accession>
<gene>
    <name evidence="1" type="primary">rnhB</name>
    <name type="ordered locus">AM1_4107</name>
</gene>
<proteinExistence type="inferred from homology"/>
<organism>
    <name type="scientific">Acaryochloris marina (strain MBIC 11017)</name>
    <dbReference type="NCBI Taxonomy" id="329726"/>
    <lineage>
        <taxon>Bacteria</taxon>
        <taxon>Bacillati</taxon>
        <taxon>Cyanobacteriota</taxon>
        <taxon>Cyanophyceae</taxon>
        <taxon>Acaryochloridales</taxon>
        <taxon>Acaryochloridaceae</taxon>
        <taxon>Acaryochloris</taxon>
    </lineage>
</organism>
<name>RNH2_ACAM1</name>
<dbReference type="EC" id="3.1.26.4" evidence="1"/>
<dbReference type="EMBL" id="CP000828">
    <property type="protein sequence ID" value="ABW29087.1"/>
    <property type="molecule type" value="Genomic_DNA"/>
</dbReference>
<dbReference type="RefSeq" id="WP_012164432.1">
    <property type="nucleotide sequence ID" value="NC_009925.1"/>
</dbReference>
<dbReference type="SMR" id="B0CAM1"/>
<dbReference type="STRING" id="329726.AM1_4107"/>
<dbReference type="KEGG" id="amr:AM1_4107"/>
<dbReference type="eggNOG" id="COG0164">
    <property type="taxonomic scope" value="Bacteria"/>
</dbReference>
<dbReference type="HOGENOM" id="CLU_036532_3_2_3"/>
<dbReference type="OrthoDB" id="9803420at2"/>
<dbReference type="Proteomes" id="UP000000268">
    <property type="component" value="Chromosome"/>
</dbReference>
<dbReference type="GO" id="GO:0005737">
    <property type="term" value="C:cytoplasm"/>
    <property type="evidence" value="ECO:0007669"/>
    <property type="project" value="UniProtKB-SubCell"/>
</dbReference>
<dbReference type="GO" id="GO:0032299">
    <property type="term" value="C:ribonuclease H2 complex"/>
    <property type="evidence" value="ECO:0007669"/>
    <property type="project" value="TreeGrafter"/>
</dbReference>
<dbReference type="GO" id="GO:0030145">
    <property type="term" value="F:manganese ion binding"/>
    <property type="evidence" value="ECO:0007669"/>
    <property type="project" value="UniProtKB-UniRule"/>
</dbReference>
<dbReference type="GO" id="GO:0003723">
    <property type="term" value="F:RNA binding"/>
    <property type="evidence" value="ECO:0007669"/>
    <property type="project" value="InterPro"/>
</dbReference>
<dbReference type="GO" id="GO:0004523">
    <property type="term" value="F:RNA-DNA hybrid ribonuclease activity"/>
    <property type="evidence" value="ECO:0007669"/>
    <property type="project" value="UniProtKB-UniRule"/>
</dbReference>
<dbReference type="GO" id="GO:0043137">
    <property type="term" value="P:DNA replication, removal of RNA primer"/>
    <property type="evidence" value="ECO:0007669"/>
    <property type="project" value="TreeGrafter"/>
</dbReference>
<dbReference type="GO" id="GO:0006298">
    <property type="term" value="P:mismatch repair"/>
    <property type="evidence" value="ECO:0007669"/>
    <property type="project" value="TreeGrafter"/>
</dbReference>
<dbReference type="CDD" id="cd07182">
    <property type="entry name" value="RNase_HII_bacteria_HII_like"/>
    <property type="match status" value="1"/>
</dbReference>
<dbReference type="Gene3D" id="3.30.420.10">
    <property type="entry name" value="Ribonuclease H-like superfamily/Ribonuclease H"/>
    <property type="match status" value="1"/>
</dbReference>
<dbReference type="HAMAP" id="MF_00052_B">
    <property type="entry name" value="RNase_HII_B"/>
    <property type="match status" value="1"/>
</dbReference>
<dbReference type="InterPro" id="IPR022898">
    <property type="entry name" value="RNase_HII"/>
</dbReference>
<dbReference type="InterPro" id="IPR001352">
    <property type="entry name" value="RNase_HII/HIII"/>
</dbReference>
<dbReference type="InterPro" id="IPR024567">
    <property type="entry name" value="RNase_HII/HIII_dom"/>
</dbReference>
<dbReference type="InterPro" id="IPR012337">
    <property type="entry name" value="RNaseH-like_sf"/>
</dbReference>
<dbReference type="InterPro" id="IPR036397">
    <property type="entry name" value="RNaseH_sf"/>
</dbReference>
<dbReference type="NCBIfam" id="NF000595">
    <property type="entry name" value="PRK00015.1-3"/>
    <property type="match status" value="1"/>
</dbReference>
<dbReference type="NCBIfam" id="NF010537">
    <property type="entry name" value="PRK13925.1"/>
    <property type="match status" value="1"/>
</dbReference>
<dbReference type="PANTHER" id="PTHR10954">
    <property type="entry name" value="RIBONUCLEASE H2 SUBUNIT A"/>
    <property type="match status" value="1"/>
</dbReference>
<dbReference type="PANTHER" id="PTHR10954:SF18">
    <property type="entry name" value="RIBONUCLEASE HII"/>
    <property type="match status" value="1"/>
</dbReference>
<dbReference type="Pfam" id="PF01351">
    <property type="entry name" value="RNase_HII"/>
    <property type="match status" value="1"/>
</dbReference>
<dbReference type="SUPFAM" id="SSF53098">
    <property type="entry name" value="Ribonuclease H-like"/>
    <property type="match status" value="1"/>
</dbReference>
<dbReference type="PROSITE" id="PS51975">
    <property type="entry name" value="RNASE_H_2"/>
    <property type="match status" value="1"/>
</dbReference>
<protein>
    <recommendedName>
        <fullName evidence="1">Ribonuclease HII</fullName>
        <shortName evidence="1">RNase HII</shortName>
        <ecNumber evidence="1">3.1.26.4</ecNumber>
    </recommendedName>
</protein>
<keyword id="KW-0963">Cytoplasm</keyword>
<keyword id="KW-0255">Endonuclease</keyword>
<keyword id="KW-0378">Hydrolase</keyword>
<keyword id="KW-0464">Manganese</keyword>
<keyword id="KW-0479">Metal-binding</keyword>
<keyword id="KW-0540">Nuclease</keyword>
<keyword id="KW-1185">Reference proteome</keyword>